<keyword id="KW-0067">ATP-binding</keyword>
<keyword id="KW-1003">Cell membrane</keyword>
<keyword id="KW-1015">Disulfide bond</keyword>
<keyword id="KW-0418">Kinase</keyword>
<keyword id="KW-0472">Membrane</keyword>
<keyword id="KW-0547">Nucleotide-binding</keyword>
<keyword id="KW-0675">Receptor</keyword>
<keyword id="KW-1185">Reference proteome</keyword>
<keyword id="KW-0677">Repeat</keyword>
<keyword id="KW-0732">Signal</keyword>
<keyword id="KW-0808">Transferase</keyword>
<keyword id="KW-0812">Transmembrane</keyword>
<keyword id="KW-1133">Transmembrane helix</keyword>
<keyword id="KW-0829">Tyrosine-protein kinase</keyword>
<name>EPB4A_DANRE</name>
<proteinExistence type="evidence at protein level"/>
<protein>
    <recommendedName>
        <fullName evidence="1">Ephrin type-B receptor 4a</fullName>
        <ecNumber evidence="3">2.7.10.1</ecNumber>
    </recommendedName>
    <alternativeName>
        <fullName evidence="12">Eph receptor B4a</fullName>
    </alternativeName>
    <alternativeName>
        <fullName evidence="11">Eph-like receptor tyrosine kinase rtk5</fullName>
    </alternativeName>
</protein>
<reference key="1">
    <citation type="journal article" date="1997" name="Dev. Genes Evol.">
        <title>Characterisation of five novel zebrafish Eph-related receptor tyrosine kinases suggests roles in patterning the neural plate.</title>
        <authorList>
            <person name="Cooke J.E."/>
            <person name="Xu Q."/>
            <person name="Wilson S.W."/>
            <person name="Holder N."/>
        </authorList>
    </citation>
    <scope>NUCLEOTIDE SEQUENCE [MRNA]</scope>
</reference>
<reference key="2">
    <citation type="journal article" date="2013" name="Nature">
        <title>The zebrafish reference genome sequence and its relationship to the human genome.</title>
        <authorList>
            <person name="Howe K."/>
            <person name="Clark M.D."/>
            <person name="Torroja C.F."/>
            <person name="Torrance J."/>
            <person name="Berthelot C."/>
            <person name="Muffato M."/>
            <person name="Collins J.E."/>
            <person name="Humphray S."/>
            <person name="McLaren K."/>
            <person name="Matthews L."/>
            <person name="McLaren S."/>
            <person name="Sealy I."/>
            <person name="Caccamo M."/>
            <person name="Churcher C."/>
            <person name="Scott C."/>
            <person name="Barrett J.C."/>
            <person name="Koch R."/>
            <person name="Rauch G.J."/>
            <person name="White S."/>
            <person name="Chow W."/>
            <person name="Kilian B."/>
            <person name="Quintais L.T."/>
            <person name="Guerra-Assuncao J.A."/>
            <person name="Zhou Y."/>
            <person name="Gu Y."/>
            <person name="Yen J."/>
            <person name="Vogel J.H."/>
            <person name="Eyre T."/>
            <person name="Redmond S."/>
            <person name="Banerjee R."/>
            <person name="Chi J."/>
            <person name="Fu B."/>
            <person name="Langley E."/>
            <person name="Maguire S.F."/>
            <person name="Laird G.K."/>
            <person name="Lloyd D."/>
            <person name="Kenyon E."/>
            <person name="Donaldson S."/>
            <person name="Sehra H."/>
            <person name="Almeida-King J."/>
            <person name="Loveland J."/>
            <person name="Trevanion S."/>
            <person name="Jones M."/>
            <person name="Quail M."/>
            <person name="Willey D."/>
            <person name="Hunt A."/>
            <person name="Burton J."/>
            <person name="Sims S."/>
            <person name="McLay K."/>
            <person name="Plumb B."/>
            <person name="Davis J."/>
            <person name="Clee C."/>
            <person name="Oliver K."/>
            <person name="Clark R."/>
            <person name="Riddle C."/>
            <person name="Elliot D."/>
            <person name="Threadgold G."/>
            <person name="Harden G."/>
            <person name="Ware D."/>
            <person name="Begum S."/>
            <person name="Mortimore B."/>
            <person name="Kerry G."/>
            <person name="Heath P."/>
            <person name="Phillimore B."/>
            <person name="Tracey A."/>
            <person name="Corby N."/>
            <person name="Dunn M."/>
            <person name="Johnson C."/>
            <person name="Wood J."/>
            <person name="Clark S."/>
            <person name="Pelan S."/>
            <person name="Griffiths G."/>
            <person name="Smith M."/>
            <person name="Glithero R."/>
            <person name="Howden P."/>
            <person name="Barker N."/>
            <person name="Lloyd C."/>
            <person name="Stevens C."/>
            <person name="Harley J."/>
            <person name="Holt K."/>
            <person name="Panagiotidis G."/>
            <person name="Lovell J."/>
            <person name="Beasley H."/>
            <person name="Henderson C."/>
            <person name="Gordon D."/>
            <person name="Auger K."/>
            <person name="Wright D."/>
            <person name="Collins J."/>
            <person name="Raisen C."/>
            <person name="Dyer L."/>
            <person name="Leung K."/>
            <person name="Robertson L."/>
            <person name="Ambridge K."/>
            <person name="Leongamornlert D."/>
            <person name="McGuire S."/>
            <person name="Gilderthorp R."/>
            <person name="Griffiths C."/>
            <person name="Manthravadi D."/>
            <person name="Nichol S."/>
            <person name="Barker G."/>
            <person name="Whitehead S."/>
            <person name="Kay M."/>
            <person name="Brown J."/>
            <person name="Murnane C."/>
            <person name="Gray E."/>
            <person name="Humphries M."/>
            <person name="Sycamore N."/>
            <person name="Barker D."/>
            <person name="Saunders D."/>
            <person name="Wallis J."/>
            <person name="Babbage A."/>
            <person name="Hammond S."/>
            <person name="Mashreghi-Mohammadi M."/>
            <person name="Barr L."/>
            <person name="Martin S."/>
            <person name="Wray P."/>
            <person name="Ellington A."/>
            <person name="Matthews N."/>
            <person name="Ellwood M."/>
            <person name="Woodmansey R."/>
            <person name="Clark G."/>
            <person name="Cooper J."/>
            <person name="Tromans A."/>
            <person name="Grafham D."/>
            <person name="Skuce C."/>
            <person name="Pandian R."/>
            <person name="Andrews R."/>
            <person name="Harrison E."/>
            <person name="Kimberley A."/>
            <person name="Garnett J."/>
            <person name="Fosker N."/>
            <person name="Hall R."/>
            <person name="Garner P."/>
            <person name="Kelly D."/>
            <person name="Bird C."/>
            <person name="Palmer S."/>
            <person name="Gehring I."/>
            <person name="Berger A."/>
            <person name="Dooley C.M."/>
            <person name="Ersan-Urun Z."/>
            <person name="Eser C."/>
            <person name="Geiger H."/>
            <person name="Geisler M."/>
            <person name="Karotki L."/>
            <person name="Kirn A."/>
            <person name="Konantz J."/>
            <person name="Konantz M."/>
            <person name="Oberlander M."/>
            <person name="Rudolph-Geiger S."/>
            <person name="Teucke M."/>
            <person name="Lanz C."/>
            <person name="Raddatz G."/>
            <person name="Osoegawa K."/>
            <person name="Zhu B."/>
            <person name="Rapp A."/>
            <person name="Widaa S."/>
            <person name="Langford C."/>
            <person name="Yang F."/>
            <person name="Schuster S.C."/>
            <person name="Carter N.P."/>
            <person name="Harrow J."/>
            <person name="Ning Z."/>
            <person name="Herrero J."/>
            <person name="Searle S.M."/>
            <person name="Enright A."/>
            <person name="Geisler R."/>
            <person name="Plasterk R.H."/>
            <person name="Lee C."/>
            <person name="Westerfield M."/>
            <person name="de Jong P.J."/>
            <person name="Zon L.I."/>
            <person name="Postlethwait J.H."/>
            <person name="Nusslein-Volhard C."/>
            <person name="Hubbard T.J."/>
            <person name="Roest Crollius H."/>
            <person name="Rogers J."/>
            <person name="Stemple D.L."/>
        </authorList>
    </citation>
    <scope>NUCLEOTIDE SEQUENCE [LARGE SCALE GENOMIC DNA]</scope>
    <source>
        <strain>Tuebingen</strain>
    </source>
</reference>
<reference key="3">
    <citation type="journal article" date="1998" name="Genes Dev.">
        <title>Eph signaling is required for segmentation and differentiation of the somites.</title>
        <authorList>
            <person name="Durbin L."/>
            <person name="Brennan C."/>
            <person name="Shiomi K."/>
            <person name="Cooke J."/>
            <person name="Barrios A."/>
            <person name="Shanmugalingam S."/>
            <person name="Guthrie B."/>
            <person name="Lindberg R."/>
            <person name="Holder N."/>
        </authorList>
    </citation>
    <scope>FUNCTION</scope>
</reference>
<reference key="4">
    <citation type="journal article" date="2018" name="Brain">
        <title>Loss of function mutations in EPHB4 are responsible for vein of Galen aneurysmal malformation.</title>
        <authorList>
            <person name="Vivanti A."/>
            <person name="Ozanne A."/>
            <person name="Grondin C."/>
            <person name="Saliou G."/>
            <person name="Quevarec L."/>
            <person name="Maurey H."/>
            <person name="Aubourg P."/>
            <person name="Benachi A."/>
            <person name="Gut M."/>
            <person name="Gut I."/>
            <person name="Martinovic J."/>
            <person name="Senat M.V."/>
            <person name="Tawk M."/>
            <person name="Melki J."/>
        </authorList>
    </citation>
    <scope>DISRUPTION PHENOTYPE</scope>
    <scope>FUNCTION</scope>
</reference>
<organism>
    <name type="scientific">Danio rerio</name>
    <name type="common">Zebrafish</name>
    <name type="synonym">Brachydanio rerio</name>
    <dbReference type="NCBI Taxonomy" id="7955"/>
    <lineage>
        <taxon>Eukaryota</taxon>
        <taxon>Metazoa</taxon>
        <taxon>Chordata</taxon>
        <taxon>Craniata</taxon>
        <taxon>Vertebrata</taxon>
        <taxon>Euteleostomi</taxon>
        <taxon>Actinopterygii</taxon>
        <taxon>Neopterygii</taxon>
        <taxon>Teleostei</taxon>
        <taxon>Ostariophysi</taxon>
        <taxon>Cypriniformes</taxon>
        <taxon>Danionidae</taxon>
        <taxon>Danioninae</taxon>
        <taxon>Danio</taxon>
    </lineage>
</organism>
<comment type="function">
    <text evidence="1 8 9">Receptor tyrosine kinase which binds promiscuously transmembrane ephrin-B family ligands residing on adjacent cells, leading to contact-dependent bidirectional signaling into neighboring cells. The signaling pathway downstream of the receptor is referred to as forward signaling while the signaling pathway downstream of the ephrin ligand is referred to as reverse signaling. Together with its cognate ligand/functional ligand EFNB2 is involved in the regulation of cell adhesion and cell migration, and plays a central role in heart morphogenesis, angiogenesis and blood vessel remodeling and permeability (PubMed:29444212). EPHB4-mediated forward signaling controls cellular repulsion and segregation from EFNB2-expressing cells (By similarity) (PubMed:29444212). Involved in somitogenesis (PubMed:9765210).</text>
</comment>
<comment type="catalytic activity">
    <reaction evidence="3">
        <text>L-tyrosyl-[protein] + ATP = O-phospho-L-tyrosyl-[protein] + ADP + H(+)</text>
        <dbReference type="Rhea" id="RHEA:10596"/>
        <dbReference type="Rhea" id="RHEA-COMP:10136"/>
        <dbReference type="Rhea" id="RHEA-COMP:20101"/>
        <dbReference type="ChEBI" id="CHEBI:15378"/>
        <dbReference type="ChEBI" id="CHEBI:30616"/>
        <dbReference type="ChEBI" id="CHEBI:46858"/>
        <dbReference type="ChEBI" id="CHEBI:61978"/>
        <dbReference type="ChEBI" id="CHEBI:456216"/>
        <dbReference type="EC" id="2.7.10.1"/>
    </reaction>
</comment>
<comment type="interaction">
    <interactant intactId="EBI-42477299">
        <id>O73875</id>
    </interactant>
    <interactant intactId="EBI-42473274">
        <id>O73874</id>
        <label>efnb2a</label>
    </interactant>
    <organismsDiffer>false</organismsDiffer>
    <experiments>2</experiments>
</comment>
<comment type="subcellular location">
    <subcellularLocation>
        <location evidence="1">Cell membrane</location>
        <topology evidence="1">Single-pass type I membrane protein</topology>
    </subcellularLocation>
</comment>
<comment type="disruption phenotype">
    <text evidence="8">Morpholino knockdown of the protein results in marked vascular anomalies of the dorsal cranial vessels including both dorsal longitudinal and mesencephalic veins.</text>
</comment>
<comment type="similarity">
    <text evidence="3">Belongs to the protein kinase superfamily. Tyr protein kinase family. Ephrin receptor subfamily.</text>
</comment>
<dbReference type="EC" id="2.7.10.1" evidence="3"/>
<dbReference type="EMBL" id="AJ005026">
    <property type="protein sequence ID" value="CAA06299.2"/>
    <property type="molecule type" value="mRNA"/>
</dbReference>
<dbReference type="EMBL" id="CABZ01093042">
    <property type="status" value="NOT_ANNOTATED_CDS"/>
    <property type="molecule type" value="Genomic_DNA"/>
</dbReference>
<dbReference type="EMBL" id="FO904976">
    <property type="status" value="NOT_ANNOTATED_CDS"/>
    <property type="molecule type" value="Genomic_DNA"/>
</dbReference>
<dbReference type="EMBL" id="CABZ01093043">
    <property type="status" value="NOT_ANNOTATED_CDS"/>
    <property type="molecule type" value="Genomic_DNA"/>
</dbReference>
<dbReference type="EMBL" id="CABZ01112153">
    <property type="status" value="NOT_ANNOTATED_CDS"/>
    <property type="molecule type" value="Genomic_DNA"/>
</dbReference>
<dbReference type="EMBL" id="CABZ01112154">
    <property type="status" value="NOT_ANNOTATED_CDS"/>
    <property type="molecule type" value="Genomic_DNA"/>
</dbReference>
<dbReference type="EMBL" id="CABZ01112155">
    <property type="status" value="NOT_ANNOTATED_CDS"/>
    <property type="molecule type" value="Genomic_DNA"/>
</dbReference>
<dbReference type="EMBL" id="CABZ01112156">
    <property type="status" value="NOT_ANNOTATED_CDS"/>
    <property type="molecule type" value="Genomic_DNA"/>
</dbReference>
<dbReference type="EMBL" id="CABZ01112157">
    <property type="status" value="NOT_ANNOTATED_CDS"/>
    <property type="molecule type" value="Genomic_DNA"/>
</dbReference>
<dbReference type="EMBL" id="CU682352">
    <property type="status" value="NOT_ANNOTATED_CDS"/>
    <property type="molecule type" value="Genomic_DNA"/>
</dbReference>
<dbReference type="EMBL" id="CU928075">
    <property type="status" value="NOT_ANNOTATED_CDS"/>
    <property type="molecule type" value="Genomic_DNA"/>
</dbReference>
<dbReference type="RefSeq" id="NP_571489.1">
    <property type="nucleotide sequence ID" value="NM_131414.1"/>
</dbReference>
<dbReference type="SMR" id="O73875"/>
<dbReference type="FunCoup" id="O73875">
    <property type="interactions" value="1057"/>
</dbReference>
<dbReference type="IntAct" id="O73875">
    <property type="interactions" value="1"/>
</dbReference>
<dbReference type="STRING" id="7955.ENSDARP00000152897"/>
<dbReference type="PaxDb" id="7955-ENSDARP00000111946"/>
<dbReference type="Ensembl" id="ENSDART00000187955">
    <property type="protein sequence ID" value="ENSDARP00000152897"/>
    <property type="gene ID" value="ENSDARG00000100725"/>
</dbReference>
<dbReference type="GeneID" id="30688"/>
<dbReference type="KEGG" id="dre:30688"/>
<dbReference type="AGR" id="ZFIN:ZDB-GENE-990415-62"/>
<dbReference type="CTD" id="30688"/>
<dbReference type="ZFIN" id="ZDB-GENE-990415-62">
    <property type="gene designation" value="ephb4a"/>
</dbReference>
<dbReference type="InParanoid" id="O73875"/>
<dbReference type="OMA" id="STKCRAC"/>
<dbReference type="OrthoDB" id="4062651at2759"/>
<dbReference type="PhylomeDB" id="O73875"/>
<dbReference type="Reactome" id="R-DRE-2682334">
    <property type="pathway name" value="EPH-Ephrin signaling"/>
</dbReference>
<dbReference type="Reactome" id="R-DRE-3928662">
    <property type="pathway name" value="EPHB-mediated forward signaling"/>
</dbReference>
<dbReference type="Reactome" id="R-DRE-3928664">
    <property type="pathway name" value="Ephrin signaling"/>
</dbReference>
<dbReference type="Reactome" id="R-DRE-3928665">
    <property type="pathway name" value="EPH-ephrin mediated repulsion of cells"/>
</dbReference>
<dbReference type="PRO" id="PR:O73875"/>
<dbReference type="Proteomes" id="UP000000437">
    <property type="component" value="Chromosome 5"/>
</dbReference>
<dbReference type="Bgee" id="ENSDARG00000100725">
    <property type="expression patterns" value="Expressed in chordate pharynx and 68 other cell types or tissues"/>
</dbReference>
<dbReference type="ExpressionAtlas" id="O73875">
    <property type="expression patterns" value="baseline"/>
</dbReference>
<dbReference type="GO" id="GO:0005886">
    <property type="term" value="C:plasma membrane"/>
    <property type="evidence" value="ECO:0000318"/>
    <property type="project" value="GO_Central"/>
</dbReference>
<dbReference type="GO" id="GO:0043235">
    <property type="term" value="C:receptor complex"/>
    <property type="evidence" value="ECO:0000318"/>
    <property type="project" value="GO_Central"/>
</dbReference>
<dbReference type="GO" id="GO:0005524">
    <property type="term" value="F:ATP binding"/>
    <property type="evidence" value="ECO:0007669"/>
    <property type="project" value="UniProtKB-KW"/>
</dbReference>
<dbReference type="GO" id="GO:0005003">
    <property type="term" value="F:ephrin receptor activity"/>
    <property type="evidence" value="ECO:0007669"/>
    <property type="project" value="InterPro"/>
</dbReference>
<dbReference type="GO" id="GO:0004714">
    <property type="term" value="F:transmembrane receptor protein tyrosine kinase activity"/>
    <property type="evidence" value="ECO:0000318"/>
    <property type="project" value="GO_Central"/>
</dbReference>
<dbReference type="GO" id="GO:0035475">
    <property type="term" value="P:angioblast cell migration involved in selective angioblast sprouting"/>
    <property type="evidence" value="ECO:0000315"/>
    <property type="project" value="ZFIN"/>
</dbReference>
<dbReference type="GO" id="GO:0001568">
    <property type="term" value="P:blood vessel development"/>
    <property type="evidence" value="ECO:0000315"/>
    <property type="project" value="ZFIN"/>
</dbReference>
<dbReference type="GO" id="GO:0060026">
    <property type="term" value="P:convergent extension"/>
    <property type="evidence" value="ECO:0000316"/>
    <property type="project" value="ZFIN"/>
</dbReference>
<dbReference type="GO" id="GO:0048013">
    <property type="term" value="P:ephrin receptor signaling pathway"/>
    <property type="evidence" value="ECO:0000316"/>
    <property type="project" value="ZFIN"/>
</dbReference>
<dbReference type="GO" id="GO:0001945">
    <property type="term" value="P:lymph vessel development"/>
    <property type="evidence" value="ECO:0000315"/>
    <property type="project" value="ZFIN"/>
</dbReference>
<dbReference type="GO" id="GO:0048845">
    <property type="term" value="P:venous blood vessel morphogenesis"/>
    <property type="evidence" value="ECO:0000315"/>
    <property type="project" value="ZFIN"/>
</dbReference>
<dbReference type="CDD" id="cd10474">
    <property type="entry name" value="EphR_LBD_B4"/>
    <property type="match status" value="1"/>
</dbReference>
<dbReference type="CDD" id="cd00063">
    <property type="entry name" value="FN3"/>
    <property type="match status" value="2"/>
</dbReference>
<dbReference type="CDD" id="cd05065">
    <property type="entry name" value="PTKc_EphR_B"/>
    <property type="match status" value="1"/>
</dbReference>
<dbReference type="CDD" id="cd09554">
    <property type="entry name" value="SAM_EPH-B4"/>
    <property type="match status" value="1"/>
</dbReference>
<dbReference type="FunFam" id="1.10.150.50:FF:000001">
    <property type="entry name" value="Ephrin type-A receptor 5"/>
    <property type="match status" value="1"/>
</dbReference>
<dbReference type="FunFam" id="2.10.50.10:FF:000001">
    <property type="entry name" value="Ephrin type-A receptor 5"/>
    <property type="match status" value="1"/>
</dbReference>
<dbReference type="FunFam" id="3.30.200.20:FF:000001">
    <property type="entry name" value="Ephrin type-A receptor 5"/>
    <property type="match status" value="1"/>
</dbReference>
<dbReference type="FunFam" id="2.60.40.10:FF:000059">
    <property type="entry name" value="Ephrin type-A receptor 6"/>
    <property type="match status" value="1"/>
</dbReference>
<dbReference type="FunFam" id="1.10.510.10:FF:000015">
    <property type="entry name" value="Ephrin type-B receptor 2"/>
    <property type="match status" value="1"/>
</dbReference>
<dbReference type="FunFam" id="2.60.120.260:FF:000071">
    <property type="entry name" value="Ephrin type-B receptor 4"/>
    <property type="match status" value="1"/>
</dbReference>
<dbReference type="FunFam" id="2.60.40.10:FF:000787">
    <property type="entry name" value="ephrin type-B receptor 4"/>
    <property type="match status" value="1"/>
</dbReference>
<dbReference type="FunFam" id="2.60.40.1770:FF:000003">
    <property type="entry name" value="ephrin type-B receptor 4"/>
    <property type="match status" value="1"/>
</dbReference>
<dbReference type="Gene3D" id="2.60.40.1770">
    <property type="entry name" value="ephrin a2 ectodomain"/>
    <property type="match status" value="1"/>
</dbReference>
<dbReference type="Gene3D" id="2.60.120.260">
    <property type="entry name" value="Galactose-binding domain-like"/>
    <property type="match status" value="1"/>
</dbReference>
<dbReference type="Gene3D" id="2.60.40.10">
    <property type="entry name" value="Immunoglobulins"/>
    <property type="match status" value="2"/>
</dbReference>
<dbReference type="Gene3D" id="3.30.200.20">
    <property type="entry name" value="Phosphorylase Kinase, domain 1"/>
    <property type="match status" value="1"/>
</dbReference>
<dbReference type="Gene3D" id="1.10.150.50">
    <property type="entry name" value="Transcription Factor, Ets-1"/>
    <property type="match status" value="1"/>
</dbReference>
<dbReference type="Gene3D" id="1.10.510.10">
    <property type="entry name" value="Transferase(Phosphotransferase) domain 1"/>
    <property type="match status" value="1"/>
</dbReference>
<dbReference type="Gene3D" id="2.10.50.10">
    <property type="entry name" value="Tumor Necrosis Factor Receptor, subunit A, domain 2"/>
    <property type="match status" value="1"/>
</dbReference>
<dbReference type="InterPro" id="IPR037636">
    <property type="entry name" value="EPH-B4_SAM"/>
</dbReference>
<dbReference type="InterPro" id="IPR027936">
    <property type="entry name" value="Eph_TM"/>
</dbReference>
<dbReference type="InterPro" id="IPR034290">
    <property type="entry name" value="EphB4_rcpt_lig-bd"/>
</dbReference>
<dbReference type="InterPro" id="IPR001090">
    <property type="entry name" value="Ephrin_rcpt_lig-bd_dom"/>
</dbReference>
<dbReference type="InterPro" id="IPR050449">
    <property type="entry name" value="Ephrin_rcpt_TKs"/>
</dbReference>
<dbReference type="InterPro" id="IPR003961">
    <property type="entry name" value="FN3_dom"/>
</dbReference>
<dbReference type="InterPro" id="IPR036116">
    <property type="entry name" value="FN3_sf"/>
</dbReference>
<dbReference type="InterPro" id="IPR008979">
    <property type="entry name" value="Galactose-bd-like_sf"/>
</dbReference>
<dbReference type="InterPro" id="IPR009030">
    <property type="entry name" value="Growth_fac_rcpt_cys_sf"/>
</dbReference>
<dbReference type="InterPro" id="IPR013783">
    <property type="entry name" value="Ig-like_fold"/>
</dbReference>
<dbReference type="InterPro" id="IPR011009">
    <property type="entry name" value="Kinase-like_dom_sf"/>
</dbReference>
<dbReference type="InterPro" id="IPR000719">
    <property type="entry name" value="Prot_kinase_dom"/>
</dbReference>
<dbReference type="InterPro" id="IPR017441">
    <property type="entry name" value="Protein_kinase_ATP_BS"/>
</dbReference>
<dbReference type="InterPro" id="IPR001660">
    <property type="entry name" value="SAM"/>
</dbReference>
<dbReference type="InterPro" id="IPR013761">
    <property type="entry name" value="SAM/pointed_sf"/>
</dbReference>
<dbReference type="InterPro" id="IPR001245">
    <property type="entry name" value="Ser-Thr/Tyr_kinase_cat_dom"/>
</dbReference>
<dbReference type="InterPro" id="IPR008266">
    <property type="entry name" value="Tyr_kinase_AS"/>
</dbReference>
<dbReference type="InterPro" id="IPR020635">
    <property type="entry name" value="Tyr_kinase_cat_dom"/>
</dbReference>
<dbReference type="InterPro" id="IPR016257">
    <property type="entry name" value="Tyr_kinase_ephrin_rcpt"/>
</dbReference>
<dbReference type="InterPro" id="IPR001426">
    <property type="entry name" value="Tyr_kinase_rcpt_V_CS"/>
</dbReference>
<dbReference type="PANTHER" id="PTHR46877">
    <property type="entry name" value="EPH RECEPTOR A5"/>
    <property type="match status" value="1"/>
</dbReference>
<dbReference type="PANTHER" id="PTHR46877:SF19">
    <property type="entry name" value="RECEPTOR PROTEIN-TYROSINE KINASE"/>
    <property type="match status" value="1"/>
</dbReference>
<dbReference type="Pfam" id="PF14575">
    <property type="entry name" value="EphA2_TM"/>
    <property type="match status" value="1"/>
</dbReference>
<dbReference type="Pfam" id="PF01404">
    <property type="entry name" value="Ephrin_lbd"/>
    <property type="match status" value="1"/>
</dbReference>
<dbReference type="Pfam" id="PF00041">
    <property type="entry name" value="fn3"/>
    <property type="match status" value="2"/>
</dbReference>
<dbReference type="Pfam" id="PF07714">
    <property type="entry name" value="PK_Tyr_Ser-Thr"/>
    <property type="match status" value="1"/>
</dbReference>
<dbReference type="Pfam" id="PF00536">
    <property type="entry name" value="SAM_1"/>
    <property type="match status" value="1"/>
</dbReference>
<dbReference type="PIRSF" id="PIRSF000666">
    <property type="entry name" value="TyrPK_ephrin_receptor"/>
    <property type="match status" value="1"/>
</dbReference>
<dbReference type="PRINTS" id="PR00109">
    <property type="entry name" value="TYRKINASE"/>
</dbReference>
<dbReference type="SMART" id="SM00615">
    <property type="entry name" value="EPH_lbd"/>
    <property type="match status" value="1"/>
</dbReference>
<dbReference type="SMART" id="SM01411">
    <property type="entry name" value="Ephrin_rec_like"/>
    <property type="match status" value="1"/>
</dbReference>
<dbReference type="SMART" id="SM00060">
    <property type="entry name" value="FN3"/>
    <property type="match status" value="2"/>
</dbReference>
<dbReference type="SMART" id="SM00454">
    <property type="entry name" value="SAM"/>
    <property type="match status" value="1"/>
</dbReference>
<dbReference type="SMART" id="SM00219">
    <property type="entry name" value="TyrKc"/>
    <property type="match status" value="1"/>
</dbReference>
<dbReference type="SUPFAM" id="SSF49265">
    <property type="entry name" value="Fibronectin type III"/>
    <property type="match status" value="1"/>
</dbReference>
<dbReference type="SUPFAM" id="SSF49785">
    <property type="entry name" value="Galactose-binding domain-like"/>
    <property type="match status" value="1"/>
</dbReference>
<dbReference type="SUPFAM" id="SSF57184">
    <property type="entry name" value="Growth factor receptor domain"/>
    <property type="match status" value="1"/>
</dbReference>
<dbReference type="SUPFAM" id="SSF56112">
    <property type="entry name" value="Protein kinase-like (PK-like)"/>
    <property type="match status" value="1"/>
</dbReference>
<dbReference type="SUPFAM" id="SSF47769">
    <property type="entry name" value="SAM/Pointed domain"/>
    <property type="match status" value="1"/>
</dbReference>
<dbReference type="PROSITE" id="PS01186">
    <property type="entry name" value="EGF_2"/>
    <property type="match status" value="1"/>
</dbReference>
<dbReference type="PROSITE" id="PS51550">
    <property type="entry name" value="EPH_LBD"/>
    <property type="match status" value="1"/>
</dbReference>
<dbReference type="PROSITE" id="PS50853">
    <property type="entry name" value="FN3"/>
    <property type="match status" value="2"/>
</dbReference>
<dbReference type="PROSITE" id="PS00107">
    <property type="entry name" value="PROTEIN_KINASE_ATP"/>
    <property type="match status" value="1"/>
</dbReference>
<dbReference type="PROSITE" id="PS50011">
    <property type="entry name" value="PROTEIN_KINASE_DOM"/>
    <property type="match status" value="1"/>
</dbReference>
<dbReference type="PROSITE" id="PS00109">
    <property type="entry name" value="PROTEIN_KINASE_TYR"/>
    <property type="match status" value="1"/>
</dbReference>
<dbReference type="PROSITE" id="PS00791">
    <property type="entry name" value="RECEPTOR_TYR_KIN_V_2"/>
    <property type="match status" value="1"/>
</dbReference>
<dbReference type="PROSITE" id="PS50105">
    <property type="entry name" value="SAM_DOMAIN"/>
    <property type="match status" value="1"/>
</dbReference>
<evidence type="ECO:0000250" key="1">
    <source>
        <dbReference type="UniProtKB" id="P54760"/>
    </source>
</evidence>
<evidence type="ECO:0000255" key="2"/>
<evidence type="ECO:0000255" key="3">
    <source>
        <dbReference type="PROSITE-ProRule" id="PRU00159"/>
    </source>
</evidence>
<evidence type="ECO:0000255" key="4">
    <source>
        <dbReference type="PROSITE-ProRule" id="PRU00184"/>
    </source>
</evidence>
<evidence type="ECO:0000255" key="5">
    <source>
        <dbReference type="PROSITE-ProRule" id="PRU00316"/>
    </source>
</evidence>
<evidence type="ECO:0000255" key="6">
    <source>
        <dbReference type="PROSITE-ProRule" id="PRU00883"/>
    </source>
</evidence>
<evidence type="ECO:0000256" key="7">
    <source>
        <dbReference type="SAM" id="MobiDB-lite"/>
    </source>
</evidence>
<evidence type="ECO:0000269" key="8">
    <source>
    </source>
</evidence>
<evidence type="ECO:0000269" key="9">
    <source>
    </source>
</evidence>
<evidence type="ECO:0000303" key="10">
    <source>
    </source>
</evidence>
<evidence type="ECO:0000312" key="11">
    <source>
        <dbReference type="EMBL" id="CAA06299.2"/>
    </source>
</evidence>
<evidence type="ECO:0000312" key="12">
    <source>
        <dbReference type="ZFIN" id="ZDB-GENE-990415-62"/>
    </source>
</evidence>
<gene>
    <name evidence="12" type="primary">ephb4a</name>
    <name evidence="10" type="synonym">rtk5</name>
</gene>
<feature type="signal peptide" evidence="2">
    <location>
        <begin position="1"/>
        <end position="24"/>
    </location>
</feature>
<feature type="chain" id="PRO_5004159945" description="Ephrin type-B receptor 4a" evidence="2">
    <location>
        <begin position="25"/>
        <end position="987"/>
    </location>
</feature>
<feature type="topological domain" description="Extracellular" evidence="2">
    <location>
        <begin position="25"/>
        <end position="548"/>
    </location>
</feature>
<feature type="transmembrane region" description="Helical" evidence="2">
    <location>
        <begin position="549"/>
        <end position="569"/>
    </location>
</feature>
<feature type="topological domain" description="Cytoplasmic" evidence="2">
    <location>
        <begin position="570"/>
        <end position="987"/>
    </location>
</feature>
<feature type="domain" description="Eph LBD" evidence="6">
    <location>
        <begin position="26"/>
        <end position="205"/>
    </location>
</feature>
<feature type="domain" description="Fibronectin type-III 1" evidence="5">
    <location>
        <begin position="328"/>
        <end position="438"/>
    </location>
</feature>
<feature type="domain" description="Fibronectin type-III 2" evidence="5">
    <location>
        <begin position="442"/>
        <end position="536"/>
    </location>
</feature>
<feature type="domain" description="Protein kinase" evidence="3">
    <location>
        <begin position="621"/>
        <end position="884"/>
    </location>
</feature>
<feature type="domain" description="SAM" evidence="4">
    <location>
        <begin position="914"/>
        <end position="978"/>
    </location>
</feature>
<feature type="region of interest" description="Disordered" evidence="7">
    <location>
        <begin position="319"/>
        <end position="340"/>
    </location>
</feature>
<feature type="compositionally biased region" description="Pro residues" evidence="7">
    <location>
        <begin position="326"/>
        <end position="335"/>
    </location>
</feature>
<feature type="active site" description="Proton acceptor" evidence="3">
    <location>
        <position position="746"/>
    </location>
</feature>
<feature type="binding site" evidence="3">
    <location>
        <begin position="627"/>
        <end position="635"/>
    </location>
    <ligand>
        <name>ATP</name>
        <dbReference type="ChEBI" id="CHEBI:30616"/>
    </ligand>
</feature>
<feature type="binding site" evidence="3">
    <location>
        <position position="653"/>
    </location>
    <ligand>
        <name>ATP</name>
        <dbReference type="ChEBI" id="CHEBI:30616"/>
    </ligand>
</feature>
<feature type="disulfide bond" evidence="1">
    <location>
        <begin position="70"/>
        <end position="187"/>
    </location>
</feature>
<feature type="disulfide bond" evidence="1">
    <location>
        <begin position="104"/>
        <end position="114"/>
    </location>
</feature>
<feature type="sequence conflict" description="In Ref. 1; CAA06299." ref="1">
    <original>I</original>
    <variation>V</variation>
    <location>
        <position position="13"/>
    </location>
</feature>
<feature type="sequence conflict" description="In Ref. 1; CAA06299." ref="1">
    <original>WL</original>
    <variation>CV</variation>
    <location>
        <begin position="79"/>
        <end position="80"/>
    </location>
</feature>
<feature type="sequence conflict" description="In Ref. 1; CAA06299." ref="1">
    <original>P</original>
    <variation>S</variation>
    <location>
        <position position="852"/>
    </location>
</feature>
<accession>O73875</accession>
<accession>A0A2R8QG60</accession>
<sequence>MELFSRNVAAFWIILLEFLLGSVAEEEVLMNTKTETSDLKWTTHSRSKPEWEEVSGLDEENNSVRTYQICQADGSSSHWLRSKLIERRGASQVYVELFFTMVECSSRNTHHRSCKETFNLYYYQSDTDDATATHPAWMENPYTKVDTVAADFLLRKGGEKKVNVKTLRLGPLSKRGFYLAFQAQGACMALLSVRVFFKKCPALTRSLSVFPETVPRSLVQEAVGQCVANAAQPGPSPRPPKMFCGEDGQWVDQPTTTCTCLPGFEASHGELECRACPVGLFKMGSGTGPCSVCPENSQTGETGSAACVCRSGFYRALSDSADTPCTRPPSSPRSPVPQVNDTSLTLEWSEPLDSGGRSDLSYSVECRMCSTPGSPCTLCSDGVNYRPSQTGIQGRRVSIWGLRPHTTYSFTVMALNGVSAQSQQGPAGETINITTSPNVPVLVSGLRKSTATESSLTLYWNTPTQSHYRILQYQIRYCEKERGSEENSCHYMESNNNEVVLSDLRRATQYEVQVRARTFAGYGSFGKAILFRTLPDEDDSSSPLLVTGILIAMGMLLLIIVIGAAIYCIRKQNNYKDPELSDKNGQYLMGQGVKVYIDPFTYEDPNEAVREFAKEIDVSCVKIEEVIGAGEFGEVCRGRLRIPGKKENYVAIKTLKGGYTDKQRRDFLAEASIMGQFQHPNIIHLEGIITASCPVMILTEFMENGALDSFLRLNDGQFTPIQLVGMLRGIASGMKYLSEMSYVHRDLAARNILVNSNLVCKVSDFGLSRFLQENSSDPTYTSSLGGKIPIRWTAPEAIAFRKFTCASDVWSYGIVMWEVMSFGERPYWDMSNQDVINAIEQDYRLPPPPDCPTYLHQLMLDCWQKERTARPRFANIVSALDKLIRNPASLKITAQEGAGPSHPLLDQRSPLTPSSCGTVGDWLRAIKMERYEETFLQAGYTSMQLVTHINTEDLLRLGITLAGHQKKILSSIEALGIQNKAPGNVLY</sequence>